<gene>
    <name evidence="1" type="primary">tlp</name>
    <name type="ordered locus">RBAM_017840</name>
</gene>
<proteinExistence type="inferred from homology"/>
<organism>
    <name type="scientific">Bacillus velezensis (strain DSM 23117 / BGSC 10A6 / LMG 26770 / FZB42)</name>
    <name type="common">Bacillus amyloliquefaciens subsp. plantarum</name>
    <dbReference type="NCBI Taxonomy" id="326423"/>
    <lineage>
        <taxon>Bacteria</taxon>
        <taxon>Bacillati</taxon>
        <taxon>Bacillota</taxon>
        <taxon>Bacilli</taxon>
        <taxon>Bacillales</taxon>
        <taxon>Bacillaceae</taxon>
        <taxon>Bacillus</taxon>
        <taxon>Bacillus amyloliquefaciens group</taxon>
    </lineage>
</organism>
<reference key="1">
    <citation type="journal article" date="2007" name="Nat. Biotechnol.">
        <title>Comparative analysis of the complete genome sequence of the plant growth-promoting bacterium Bacillus amyloliquefaciens FZB42.</title>
        <authorList>
            <person name="Chen X.H."/>
            <person name="Koumoutsi A."/>
            <person name="Scholz R."/>
            <person name="Eisenreich A."/>
            <person name="Schneider K."/>
            <person name="Heinemeyer I."/>
            <person name="Morgenstern B."/>
            <person name="Voss B."/>
            <person name="Hess W.R."/>
            <person name="Reva O."/>
            <person name="Junge H."/>
            <person name="Voigt B."/>
            <person name="Jungblut P.R."/>
            <person name="Vater J."/>
            <person name="Suessmuth R."/>
            <person name="Liesegang H."/>
            <person name="Strittmatter A."/>
            <person name="Gottschalk G."/>
            <person name="Borriss R."/>
        </authorList>
    </citation>
    <scope>NUCLEOTIDE SEQUENCE [LARGE SCALE GENOMIC DNA]</scope>
    <source>
        <strain>DSM 23117 / BGSC 10A6 / LMG 26770 / FZB42</strain>
    </source>
</reference>
<feature type="chain" id="PRO_0000315206" description="Small, acid-soluble spore protein Tlp">
    <location>
        <begin position="1"/>
        <end position="80"/>
    </location>
</feature>
<feature type="region of interest" description="Disordered" evidence="2">
    <location>
        <begin position="34"/>
        <end position="80"/>
    </location>
</feature>
<feature type="compositionally biased region" description="Basic and acidic residues" evidence="2">
    <location>
        <begin position="34"/>
        <end position="73"/>
    </location>
</feature>
<dbReference type="EMBL" id="CP000560">
    <property type="protein sequence ID" value="ABS74147.1"/>
    <property type="molecule type" value="Genomic_DNA"/>
</dbReference>
<dbReference type="RefSeq" id="WP_007410320.1">
    <property type="nucleotide sequence ID" value="NC_009725.2"/>
</dbReference>
<dbReference type="SMR" id="A7Z571"/>
<dbReference type="GeneID" id="93080916"/>
<dbReference type="KEGG" id="bay:RBAM_017840"/>
<dbReference type="HOGENOM" id="CLU_178266_1_0_9"/>
<dbReference type="Proteomes" id="UP000001120">
    <property type="component" value="Chromosome"/>
</dbReference>
<dbReference type="GO" id="GO:0030436">
    <property type="term" value="P:asexual sporulation"/>
    <property type="evidence" value="ECO:0007669"/>
    <property type="project" value="UniProtKB-UniRule"/>
</dbReference>
<dbReference type="GO" id="GO:0030435">
    <property type="term" value="P:sporulation resulting in formation of a cellular spore"/>
    <property type="evidence" value="ECO:0007669"/>
    <property type="project" value="UniProtKB-KW"/>
</dbReference>
<dbReference type="HAMAP" id="MF_01506">
    <property type="entry name" value="Tlp"/>
    <property type="match status" value="1"/>
</dbReference>
<dbReference type="InterPro" id="IPR017524">
    <property type="entry name" value="SASP_thioredoxin-like"/>
</dbReference>
<dbReference type="NCBIfam" id="TIGR03090">
    <property type="entry name" value="SASP_tlp"/>
    <property type="match status" value="1"/>
</dbReference>
<dbReference type="Pfam" id="PF19824">
    <property type="entry name" value="Tlp"/>
    <property type="match status" value="1"/>
</dbReference>
<sequence length="80" mass="9429">MTNNYQKPNPDDRSDNVEKLQDMVQNTIENIEEAKESMEFATDEEKQRIQEKNARRNESIESFRSEIQDESAARENGYQS</sequence>
<accession>A7Z571</accession>
<keyword id="KW-0749">Sporulation</keyword>
<comment type="subcellular location">
    <subcellularLocation>
        <location evidence="1">Spore core</location>
    </subcellularLocation>
</comment>
<comment type="induction">
    <text evidence="1">Expressed only in the forespore compartment of sporulating cells.</text>
</comment>
<comment type="similarity">
    <text evidence="1">Belongs to the Tlp family.</text>
</comment>
<protein>
    <recommendedName>
        <fullName evidence="1">Small, acid-soluble spore protein Tlp</fullName>
    </recommendedName>
</protein>
<name>TLP_BACVZ</name>
<evidence type="ECO:0000255" key="1">
    <source>
        <dbReference type="HAMAP-Rule" id="MF_01506"/>
    </source>
</evidence>
<evidence type="ECO:0000256" key="2">
    <source>
        <dbReference type="SAM" id="MobiDB-lite"/>
    </source>
</evidence>